<organism>
    <name type="scientific">Helicobacter pylori (strain P12)</name>
    <dbReference type="NCBI Taxonomy" id="570508"/>
    <lineage>
        <taxon>Bacteria</taxon>
        <taxon>Pseudomonadati</taxon>
        <taxon>Campylobacterota</taxon>
        <taxon>Epsilonproteobacteria</taxon>
        <taxon>Campylobacterales</taxon>
        <taxon>Helicobacteraceae</taxon>
        <taxon>Helicobacter</taxon>
    </lineage>
</organism>
<proteinExistence type="inferred from homology"/>
<evidence type="ECO:0000255" key="1">
    <source>
        <dbReference type="HAMAP-Rule" id="MF_00331"/>
    </source>
</evidence>
<name>ISCS_HELP2</name>
<dbReference type="EC" id="2.8.1.7" evidence="1"/>
<dbReference type="EMBL" id="CP001217">
    <property type="protein sequence ID" value="ACJ07380.1"/>
    <property type="molecule type" value="Genomic_DNA"/>
</dbReference>
<dbReference type="SMR" id="B6JKF2"/>
<dbReference type="KEGG" id="hpp:HPP12_0221"/>
<dbReference type="HOGENOM" id="CLU_003433_0_0_7"/>
<dbReference type="UniPathway" id="UPA00266"/>
<dbReference type="Proteomes" id="UP000008198">
    <property type="component" value="Chromosome"/>
</dbReference>
<dbReference type="GO" id="GO:0005737">
    <property type="term" value="C:cytoplasm"/>
    <property type="evidence" value="ECO:0007669"/>
    <property type="project" value="UniProtKB-SubCell"/>
</dbReference>
<dbReference type="GO" id="GO:0051537">
    <property type="term" value="F:2 iron, 2 sulfur cluster binding"/>
    <property type="evidence" value="ECO:0007669"/>
    <property type="project" value="UniProtKB-UniRule"/>
</dbReference>
<dbReference type="GO" id="GO:0031071">
    <property type="term" value="F:cysteine desulfurase activity"/>
    <property type="evidence" value="ECO:0007669"/>
    <property type="project" value="UniProtKB-UniRule"/>
</dbReference>
<dbReference type="GO" id="GO:0046872">
    <property type="term" value="F:metal ion binding"/>
    <property type="evidence" value="ECO:0007669"/>
    <property type="project" value="UniProtKB-KW"/>
</dbReference>
<dbReference type="GO" id="GO:0030170">
    <property type="term" value="F:pyridoxal phosphate binding"/>
    <property type="evidence" value="ECO:0007669"/>
    <property type="project" value="UniProtKB-UniRule"/>
</dbReference>
<dbReference type="GO" id="GO:0044571">
    <property type="term" value="P:[2Fe-2S] cluster assembly"/>
    <property type="evidence" value="ECO:0007669"/>
    <property type="project" value="UniProtKB-UniRule"/>
</dbReference>
<dbReference type="GO" id="GO:0006534">
    <property type="term" value="P:cysteine metabolic process"/>
    <property type="evidence" value="ECO:0007669"/>
    <property type="project" value="InterPro"/>
</dbReference>
<dbReference type="FunFam" id="3.40.640.10:FF:000084">
    <property type="entry name" value="IscS-like cysteine desulfurase"/>
    <property type="match status" value="1"/>
</dbReference>
<dbReference type="Gene3D" id="3.90.1150.10">
    <property type="entry name" value="Aspartate Aminotransferase, domain 1"/>
    <property type="match status" value="1"/>
</dbReference>
<dbReference type="Gene3D" id="3.40.640.10">
    <property type="entry name" value="Type I PLP-dependent aspartate aminotransferase-like (Major domain)"/>
    <property type="match status" value="1"/>
</dbReference>
<dbReference type="HAMAP" id="MF_00331">
    <property type="entry name" value="Cys_desulf_IscS"/>
    <property type="match status" value="1"/>
</dbReference>
<dbReference type="InterPro" id="IPR000192">
    <property type="entry name" value="Aminotrans_V_dom"/>
</dbReference>
<dbReference type="InterPro" id="IPR010240">
    <property type="entry name" value="Cys_deSase_IscS"/>
</dbReference>
<dbReference type="InterPro" id="IPR017773">
    <property type="entry name" value="Cys_deSase_NifS_proteobacteria"/>
</dbReference>
<dbReference type="InterPro" id="IPR016454">
    <property type="entry name" value="Cysteine_dSase"/>
</dbReference>
<dbReference type="InterPro" id="IPR015424">
    <property type="entry name" value="PyrdxlP-dep_Trfase"/>
</dbReference>
<dbReference type="InterPro" id="IPR015421">
    <property type="entry name" value="PyrdxlP-dep_Trfase_major"/>
</dbReference>
<dbReference type="InterPro" id="IPR015422">
    <property type="entry name" value="PyrdxlP-dep_Trfase_small"/>
</dbReference>
<dbReference type="NCBIfam" id="TIGR03403">
    <property type="entry name" value="nifS_epsilon"/>
    <property type="match status" value="1"/>
</dbReference>
<dbReference type="PANTHER" id="PTHR11601:SF34">
    <property type="entry name" value="CYSTEINE DESULFURASE"/>
    <property type="match status" value="1"/>
</dbReference>
<dbReference type="PANTHER" id="PTHR11601">
    <property type="entry name" value="CYSTEINE DESULFURYLASE FAMILY MEMBER"/>
    <property type="match status" value="1"/>
</dbReference>
<dbReference type="Pfam" id="PF00266">
    <property type="entry name" value="Aminotran_5"/>
    <property type="match status" value="1"/>
</dbReference>
<dbReference type="PIRSF" id="PIRSF005572">
    <property type="entry name" value="NifS"/>
    <property type="match status" value="1"/>
</dbReference>
<dbReference type="SUPFAM" id="SSF53383">
    <property type="entry name" value="PLP-dependent transferases"/>
    <property type="match status" value="1"/>
</dbReference>
<keyword id="KW-0001">2Fe-2S</keyword>
<keyword id="KW-0963">Cytoplasm</keyword>
<keyword id="KW-0408">Iron</keyword>
<keyword id="KW-0411">Iron-sulfur</keyword>
<keyword id="KW-0479">Metal-binding</keyword>
<keyword id="KW-0663">Pyridoxal phosphate</keyword>
<keyword id="KW-0808">Transferase</keyword>
<feature type="chain" id="PRO_1000119631" description="Cysteine desulfurase IscS">
    <location>
        <begin position="1"/>
        <end position="387"/>
    </location>
</feature>
<feature type="active site" description="Cysteine persulfide intermediate" evidence="1">
    <location>
        <position position="328"/>
    </location>
</feature>
<feature type="binding site" evidence="1">
    <location>
        <begin position="73"/>
        <end position="74"/>
    </location>
    <ligand>
        <name>pyridoxal 5'-phosphate</name>
        <dbReference type="ChEBI" id="CHEBI:597326"/>
    </ligand>
</feature>
<feature type="binding site" evidence="1">
    <location>
        <position position="155"/>
    </location>
    <ligand>
        <name>pyridoxal 5'-phosphate</name>
        <dbReference type="ChEBI" id="CHEBI:597326"/>
    </ligand>
</feature>
<feature type="binding site" evidence="1">
    <location>
        <position position="183"/>
    </location>
    <ligand>
        <name>pyridoxal 5'-phosphate</name>
        <dbReference type="ChEBI" id="CHEBI:597326"/>
    </ligand>
</feature>
<feature type="binding site" evidence="1">
    <location>
        <begin position="203"/>
        <end position="205"/>
    </location>
    <ligand>
        <name>pyridoxal 5'-phosphate</name>
        <dbReference type="ChEBI" id="CHEBI:597326"/>
    </ligand>
</feature>
<feature type="binding site" evidence="1">
    <location>
        <position position="241"/>
    </location>
    <ligand>
        <name>pyridoxal 5'-phosphate</name>
        <dbReference type="ChEBI" id="CHEBI:597326"/>
    </ligand>
</feature>
<feature type="binding site" description="via persulfide group" evidence="1">
    <location>
        <position position="328"/>
    </location>
    <ligand>
        <name>[2Fe-2S] cluster</name>
        <dbReference type="ChEBI" id="CHEBI:190135"/>
        <note>ligand shared with IscU</note>
    </ligand>
</feature>
<feature type="modified residue" description="N6-(pyridoxal phosphate)lysine" evidence="1">
    <location>
        <position position="206"/>
    </location>
</feature>
<gene>
    <name evidence="1" type="primary">iscS</name>
    <name type="ordered locus">HPP12_0221</name>
</gene>
<comment type="function">
    <text evidence="1">Master enzyme that delivers sulfur to a number of partners involved in Fe-S cluster assembly, tRNA modification or cofactor biosynthesis. Catalyzes the removal of elemental sulfur atoms from cysteine to produce alanine. Functions as a sulfur delivery protein for Fe-S cluster synthesis onto IscU, an Fe-S scaffold assembly protein, as well as other S acceptor proteins.</text>
</comment>
<comment type="catalytic activity">
    <reaction evidence="1">
        <text>(sulfur carrier)-H + L-cysteine = (sulfur carrier)-SH + L-alanine</text>
        <dbReference type="Rhea" id="RHEA:43892"/>
        <dbReference type="Rhea" id="RHEA-COMP:14737"/>
        <dbReference type="Rhea" id="RHEA-COMP:14739"/>
        <dbReference type="ChEBI" id="CHEBI:29917"/>
        <dbReference type="ChEBI" id="CHEBI:35235"/>
        <dbReference type="ChEBI" id="CHEBI:57972"/>
        <dbReference type="ChEBI" id="CHEBI:64428"/>
        <dbReference type="EC" id="2.8.1.7"/>
    </reaction>
</comment>
<comment type="cofactor">
    <cofactor evidence="1">
        <name>pyridoxal 5'-phosphate</name>
        <dbReference type="ChEBI" id="CHEBI:597326"/>
    </cofactor>
</comment>
<comment type="pathway">
    <text evidence="1">Cofactor biosynthesis; iron-sulfur cluster biosynthesis.</text>
</comment>
<comment type="subunit">
    <text evidence="1">Homodimer. Forms a heterotetramer with IscU, interacts with other sulfur acceptors.</text>
</comment>
<comment type="subcellular location">
    <subcellularLocation>
        <location evidence="1">Cytoplasm</location>
    </subcellularLocation>
</comment>
<comment type="similarity">
    <text evidence="1">Belongs to the class-V pyridoxal-phosphate-dependent aminotransferase family. NifS/IscS subfamily.</text>
</comment>
<accession>B6JKF2</accession>
<sequence>MLQRIYLDNNATTRIDPKVKEIMDPFLRDHYGNPSSLHQFGTETHPAIAEALDKLYKGINARDIDDVIITSCATESNNWVLKGVYFDECLKKGKNHIVTTVAEHPAVRSTCNFLESLGVEVTYLPINEHGSITAEQVKEAITEKTALVSVMWANNETGLIFPIEEIGAICKEKGVLFHTDAVQAIGKIPVDVLKANADFLSFSAHKFHGPKGIGGLYIRSGVGLTPLFHGGEHMNGRRSGTLNVPYIVGMGEAMKLAVEHLDYEKEVVGKLRDKLEEALLKIPDVMVVGDRIHRVPNTTLVSVRGIEGEAMLWDLNRSNIAASTGSACASEDLEANPVMVAIGASKELAHTAIRLSLSRFNTEAEIDKTIEVFSQAAIRLRNISSSY</sequence>
<protein>
    <recommendedName>
        <fullName evidence="1">Cysteine desulfurase IscS</fullName>
        <ecNumber evidence="1">2.8.1.7</ecNumber>
    </recommendedName>
</protein>
<reference key="1">
    <citation type="submission" date="2008-10" db="EMBL/GenBank/DDBJ databases">
        <title>The complete genome sequence of Helicobacter pylori strain P12.</title>
        <authorList>
            <person name="Fischer W."/>
            <person name="Windhager L."/>
            <person name="Karnholz A."/>
            <person name="Zeiller M."/>
            <person name="Zimmer R."/>
            <person name="Haas R."/>
        </authorList>
    </citation>
    <scope>NUCLEOTIDE SEQUENCE [LARGE SCALE GENOMIC DNA]</scope>
    <source>
        <strain>P12</strain>
    </source>
</reference>